<accession>A9MLY4</accession>
<sequence length="320" mass="35898">MRQTKTGILLANLGTPDAPTPEAVKRYLKQFLSDRRVVDTPRPLWWPLLRGVILPLRSPRVAKLYQSIWMDGGSPLMVYSREQQQGLAARLPDTPVALGMSYGSPSLESAVDELLASDVDHIVVLPLYPQYSCSTVGAVWDELGRILARKRRIPGISFIRDYADDGAYIDALAKSARESFARHGEPDLLLLSYHGIPQRYADEGDDYPQRCRDTTRELVSALGLPPEKVMMTFQSRFGREPWLTPYTDETLKMLGEKGTGHIQVMCPGFAADCLETLEEIAEQNREIFLEAGGKKYAYIPALNATPEHIDMMLKLTAPYR</sequence>
<organism>
    <name type="scientific">Salmonella arizonae (strain ATCC BAA-731 / CDC346-86 / RSK2980)</name>
    <dbReference type="NCBI Taxonomy" id="41514"/>
    <lineage>
        <taxon>Bacteria</taxon>
        <taxon>Pseudomonadati</taxon>
        <taxon>Pseudomonadota</taxon>
        <taxon>Gammaproteobacteria</taxon>
        <taxon>Enterobacterales</taxon>
        <taxon>Enterobacteriaceae</taxon>
        <taxon>Salmonella</taxon>
    </lineage>
</organism>
<gene>
    <name evidence="1" type="primary">hemH</name>
    <name type="ordered locus">SARI_02445</name>
</gene>
<name>HEMH_SALAR</name>
<protein>
    <recommendedName>
        <fullName evidence="1">Ferrochelatase</fullName>
        <ecNumber evidence="1">4.98.1.1</ecNumber>
    </recommendedName>
    <alternativeName>
        <fullName evidence="1">Heme synthase</fullName>
    </alternativeName>
    <alternativeName>
        <fullName evidence="1">Protoheme ferro-lyase</fullName>
    </alternativeName>
</protein>
<evidence type="ECO:0000255" key="1">
    <source>
        <dbReference type="HAMAP-Rule" id="MF_00323"/>
    </source>
</evidence>
<comment type="function">
    <text evidence="1">Catalyzes the ferrous insertion into protoporphyrin IX.</text>
</comment>
<comment type="catalytic activity">
    <reaction evidence="1">
        <text>heme b + 2 H(+) = protoporphyrin IX + Fe(2+)</text>
        <dbReference type="Rhea" id="RHEA:22584"/>
        <dbReference type="ChEBI" id="CHEBI:15378"/>
        <dbReference type="ChEBI" id="CHEBI:29033"/>
        <dbReference type="ChEBI" id="CHEBI:57306"/>
        <dbReference type="ChEBI" id="CHEBI:60344"/>
        <dbReference type="EC" id="4.98.1.1"/>
    </reaction>
</comment>
<comment type="pathway">
    <text evidence="1">Porphyrin-containing compound metabolism; protoheme biosynthesis; protoheme from protoporphyrin-IX: step 1/1.</text>
</comment>
<comment type="subunit">
    <text evidence="1">Monomer.</text>
</comment>
<comment type="subcellular location">
    <subcellularLocation>
        <location evidence="1">Cytoplasm</location>
    </subcellularLocation>
</comment>
<comment type="similarity">
    <text evidence="1">Belongs to the ferrochelatase family.</text>
</comment>
<proteinExistence type="inferred from homology"/>
<reference key="1">
    <citation type="submission" date="2007-11" db="EMBL/GenBank/DDBJ databases">
        <authorList>
            <consortium name="The Salmonella enterica serovar Arizonae Genome Sequencing Project"/>
            <person name="McClelland M."/>
            <person name="Sanderson E.K."/>
            <person name="Porwollik S."/>
            <person name="Spieth J."/>
            <person name="Clifton W.S."/>
            <person name="Fulton R."/>
            <person name="Chunyan W."/>
            <person name="Wollam A."/>
            <person name="Shah N."/>
            <person name="Pepin K."/>
            <person name="Bhonagiri V."/>
            <person name="Nash W."/>
            <person name="Johnson M."/>
            <person name="Thiruvilangam P."/>
            <person name="Wilson R."/>
        </authorList>
    </citation>
    <scope>NUCLEOTIDE SEQUENCE [LARGE SCALE GENOMIC DNA]</scope>
    <source>
        <strain>ATCC BAA-731 / CDC346-86 / RSK2980</strain>
    </source>
</reference>
<dbReference type="EC" id="4.98.1.1" evidence="1"/>
<dbReference type="EMBL" id="CP000880">
    <property type="protein sequence ID" value="ABX22306.1"/>
    <property type="molecule type" value="Genomic_DNA"/>
</dbReference>
<dbReference type="SMR" id="A9MLY4"/>
<dbReference type="STRING" id="41514.SARI_02445"/>
<dbReference type="KEGG" id="ses:SARI_02445"/>
<dbReference type="HOGENOM" id="CLU_018884_0_0_6"/>
<dbReference type="UniPathway" id="UPA00252">
    <property type="reaction ID" value="UER00325"/>
</dbReference>
<dbReference type="Proteomes" id="UP000002084">
    <property type="component" value="Chromosome"/>
</dbReference>
<dbReference type="GO" id="GO:0005737">
    <property type="term" value="C:cytoplasm"/>
    <property type="evidence" value="ECO:0007669"/>
    <property type="project" value="UniProtKB-SubCell"/>
</dbReference>
<dbReference type="GO" id="GO:0004325">
    <property type="term" value="F:ferrochelatase activity"/>
    <property type="evidence" value="ECO:0007669"/>
    <property type="project" value="UniProtKB-UniRule"/>
</dbReference>
<dbReference type="GO" id="GO:0046872">
    <property type="term" value="F:metal ion binding"/>
    <property type="evidence" value="ECO:0007669"/>
    <property type="project" value="UniProtKB-KW"/>
</dbReference>
<dbReference type="GO" id="GO:0006783">
    <property type="term" value="P:heme biosynthetic process"/>
    <property type="evidence" value="ECO:0007669"/>
    <property type="project" value="UniProtKB-UniRule"/>
</dbReference>
<dbReference type="CDD" id="cd00419">
    <property type="entry name" value="Ferrochelatase_C"/>
    <property type="match status" value="1"/>
</dbReference>
<dbReference type="CDD" id="cd03411">
    <property type="entry name" value="Ferrochelatase_N"/>
    <property type="match status" value="1"/>
</dbReference>
<dbReference type="FunFam" id="3.40.50.1400:FF:000004">
    <property type="entry name" value="Ferrochelatase"/>
    <property type="match status" value="1"/>
</dbReference>
<dbReference type="Gene3D" id="3.40.50.1400">
    <property type="match status" value="2"/>
</dbReference>
<dbReference type="HAMAP" id="MF_00323">
    <property type="entry name" value="Ferrochelatase"/>
    <property type="match status" value="1"/>
</dbReference>
<dbReference type="InterPro" id="IPR001015">
    <property type="entry name" value="Ferrochelatase"/>
</dbReference>
<dbReference type="InterPro" id="IPR019772">
    <property type="entry name" value="Ferrochelatase_AS"/>
</dbReference>
<dbReference type="InterPro" id="IPR033644">
    <property type="entry name" value="Ferrochelatase_C"/>
</dbReference>
<dbReference type="InterPro" id="IPR033659">
    <property type="entry name" value="Ferrochelatase_N"/>
</dbReference>
<dbReference type="NCBIfam" id="TIGR00109">
    <property type="entry name" value="hemH"/>
    <property type="match status" value="1"/>
</dbReference>
<dbReference type="PANTHER" id="PTHR11108">
    <property type="entry name" value="FERROCHELATASE"/>
    <property type="match status" value="1"/>
</dbReference>
<dbReference type="PANTHER" id="PTHR11108:SF1">
    <property type="entry name" value="FERROCHELATASE, MITOCHONDRIAL"/>
    <property type="match status" value="1"/>
</dbReference>
<dbReference type="Pfam" id="PF00762">
    <property type="entry name" value="Ferrochelatase"/>
    <property type="match status" value="1"/>
</dbReference>
<dbReference type="SUPFAM" id="SSF53800">
    <property type="entry name" value="Chelatase"/>
    <property type="match status" value="1"/>
</dbReference>
<dbReference type="PROSITE" id="PS00534">
    <property type="entry name" value="FERROCHELATASE"/>
    <property type="match status" value="1"/>
</dbReference>
<keyword id="KW-0963">Cytoplasm</keyword>
<keyword id="KW-0350">Heme biosynthesis</keyword>
<keyword id="KW-0408">Iron</keyword>
<keyword id="KW-0456">Lyase</keyword>
<keyword id="KW-0479">Metal-binding</keyword>
<keyword id="KW-0627">Porphyrin biosynthesis</keyword>
<keyword id="KW-1185">Reference proteome</keyword>
<feature type="chain" id="PRO_1000079200" description="Ferrochelatase">
    <location>
        <begin position="1"/>
        <end position="320"/>
    </location>
</feature>
<feature type="binding site" evidence="1">
    <location>
        <position position="194"/>
    </location>
    <ligand>
        <name>Fe cation</name>
        <dbReference type="ChEBI" id="CHEBI:24875"/>
    </ligand>
</feature>
<feature type="binding site" evidence="1">
    <location>
        <position position="275"/>
    </location>
    <ligand>
        <name>Fe cation</name>
        <dbReference type="ChEBI" id="CHEBI:24875"/>
    </ligand>
</feature>